<reference key="1">
    <citation type="journal article" date="2008" name="J. Bacteriol.">
        <title>Genome sequence of Staphylococcus aureus strain Newman and comparative analysis of staphylococcal genomes: polymorphism and evolution of two major pathogenicity islands.</title>
        <authorList>
            <person name="Baba T."/>
            <person name="Bae T."/>
            <person name="Schneewind O."/>
            <person name="Takeuchi F."/>
            <person name="Hiramatsu K."/>
        </authorList>
    </citation>
    <scope>NUCLEOTIDE SEQUENCE [LARGE SCALE GENOMIC DNA]</scope>
    <source>
        <strain>Newman</strain>
    </source>
</reference>
<proteinExistence type="inferred from homology"/>
<feature type="chain" id="PRO_1000071756" description="Divalent metal cation transporter MntH">
    <location>
        <begin position="1"/>
        <end position="450"/>
    </location>
</feature>
<feature type="transmembrane region" description="Helical" evidence="1">
    <location>
        <begin position="34"/>
        <end position="54"/>
    </location>
</feature>
<feature type="transmembrane region" description="Helical" evidence="1">
    <location>
        <begin position="61"/>
        <end position="81"/>
    </location>
</feature>
<feature type="transmembrane region" description="Helical" evidence="1">
    <location>
        <begin position="108"/>
        <end position="128"/>
    </location>
</feature>
<feature type="transmembrane region" description="Helical" evidence="1">
    <location>
        <begin position="141"/>
        <end position="161"/>
    </location>
</feature>
<feature type="transmembrane region" description="Helical" evidence="1">
    <location>
        <begin position="170"/>
        <end position="190"/>
    </location>
</feature>
<feature type="transmembrane region" description="Helical" evidence="1">
    <location>
        <begin position="212"/>
        <end position="232"/>
    </location>
</feature>
<feature type="transmembrane region" description="Helical" evidence="1">
    <location>
        <begin position="263"/>
        <end position="283"/>
    </location>
</feature>
<feature type="transmembrane region" description="Helical" evidence="1">
    <location>
        <begin position="305"/>
        <end position="325"/>
    </location>
</feature>
<feature type="transmembrane region" description="Helical" evidence="1">
    <location>
        <begin position="361"/>
        <end position="381"/>
    </location>
</feature>
<feature type="transmembrane region" description="Helical" evidence="1">
    <location>
        <begin position="383"/>
        <end position="403"/>
    </location>
</feature>
<feature type="transmembrane region" description="Helical" evidence="1">
    <location>
        <begin position="422"/>
        <end position="442"/>
    </location>
</feature>
<organism>
    <name type="scientific">Staphylococcus aureus (strain Newman)</name>
    <dbReference type="NCBI Taxonomy" id="426430"/>
    <lineage>
        <taxon>Bacteria</taxon>
        <taxon>Bacillati</taxon>
        <taxon>Bacillota</taxon>
        <taxon>Bacilli</taxon>
        <taxon>Bacillales</taxon>
        <taxon>Staphylococcaceae</taxon>
        <taxon>Staphylococcus</taxon>
    </lineage>
</organism>
<dbReference type="EMBL" id="AP009351">
    <property type="protein sequence ID" value="BAF67243.1"/>
    <property type="molecule type" value="Genomic_DNA"/>
</dbReference>
<dbReference type="RefSeq" id="WP_001060842.1">
    <property type="nucleotide sequence ID" value="NZ_JBBIAE010000002.1"/>
</dbReference>
<dbReference type="SMR" id="A6QFW1"/>
<dbReference type="KEGG" id="sae:NWMN_0971"/>
<dbReference type="HOGENOM" id="CLU_020088_2_0_9"/>
<dbReference type="Proteomes" id="UP000006386">
    <property type="component" value="Chromosome"/>
</dbReference>
<dbReference type="GO" id="GO:0005886">
    <property type="term" value="C:plasma membrane"/>
    <property type="evidence" value="ECO:0007669"/>
    <property type="project" value="UniProtKB-SubCell"/>
</dbReference>
<dbReference type="GO" id="GO:0015086">
    <property type="term" value="F:cadmium ion transmembrane transporter activity"/>
    <property type="evidence" value="ECO:0007669"/>
    <property type="project" value="TreeGrafter"/>
</dbReference>
<dbReference type="GO" id="GO:0005384">
    <property type="term" value="F:manganese ion transmembrane transporter activity"/>
    <property type="evidence" value="ECO:0007669"/>
    <property type="project" value="TreeGrafter"/>
</dbReference>
<dbReference type="GO" id="GO:0046872">
    <property type="term" value="F:metal ion binding"/>
    <property type="evidence" value="ECO:0007669"/>
    <property type="project" value="UniProtKB-UniRule"/>
</dbReference>
<dbReference type="GO" id="GO:0015293">
    <property type="term" value="F:symporter activity"/>
    <property type="evidence" value="ECO:0007669"/>
    <property type="project" value="UniProtKB-UniRule"/>
</dbReference>
<dbReference type="GO" id="GO:0034755">
    <property type="term" value="P:iron ion transmembrane transport"/>
    <property type="evidence" value="ECO:0007669"/>
    <property type="project" value="TreeGrafter"/>
</dbReference>
<dbReference type="HAMAP" id="MF_00221">
    <property type="entry name" value="NRAMP"/>
    <property type="match status" value="1"/>
</dbReference>
<dbReference type="InterPro" id="IPR001046">
    <property type="entry name" value="NRAMP_fam"/>
</dbReference>
<dbReference type="NCBIfam" id="TIGR01197">
    <property type="entry name" value="nramp"/>
    <property type="match status" value="1"/>
</dbReference>
<dbReference type="NCBIfam" id="NF037982">
    <property type="entry name" value="Nramp_1"/>
    <property type="match status" value="1"/>
</dbReference>
<dbReference type="NCBIfam" id="NF001923">
    <property type="entry name" value="PRK00701.1"/>
    <property type="match status" value="1"/>
</dbReference>
<dbReference type="PANTHER" id="PTHR11706:SF33">
    <property type="entry name" value="NATURAL RESISTANCE-ASSOCIATED MACROPHAGE PROTEIN 2"/>
    <property type="match status" value="1"/>
</dbReference>
<dbReference type="PANTHER" id="PTHR11706">
    <property type="entry name" value="SOLUTE CARRIER PROTEIN FAMILY 11 MEMBER"/>
    <property type="match status" value="1"/>
</dbReference>
<dbReference type="Pfam" id="PF01566">
    <property type="entry name" value="Nramp"/>
    <property type="match status" value="1"/>
</dbReference>
<dbReference type="PRINTS" id="PR00447">
    <property type="entry name" value="NATRESASSCMP"/>
</dbReference>
<name>MNTH_STAAE</name>
<accession>A6QFW1</accession>
<comment type="function">
    <text evidence="1">H(+)-stimulated, divalent metal cation uptake system.</text>
</comment>
<comment type="subcellular location">
    <subcellularLocation>
        <location evidence="1">Cell membrane</location>
        <topology evidence="1">Multi-pass membrane protein</topology>
    </subcellularLocation>
</comment>
<comment type="similarity">
    <text evidence="1">Belongs to the NRAMP family.</text>
</comment>
<keyword id="KW-1003">Cell membrane</keyword>
<keyword id="KW-0406">Ion transport</keyword>
<keyword id="KW-0472">Membrane</keyword>
<keyword id="KW-0769">Symport</keyword>
<keyword id="KW-0812">Transmembrane</keyword>
<keyword id="KW-1133">Transmembrane helix</keyword>
<keyword id="KW-0813">Transport</keyword>
<protein>
    <recommendedName>
        <fullName evidence="1">Divalent metal cation transporter MntH</fullName>
    </recommendedName>
</protein>
<sequence>MNNKRHSTNEQLSLDEINNTIKFDHRSSNKQKFLSFLGPGLLVAVGYMDPGNWITSMQGGAQYGYTLLFVILISSLSAMLLQSMTVRLGIATGMDLAQMTRHYLSRPIAIIFWIIAELAIIATDIAEVIGSAIALNLLFNIPLIVGALITVLDVFLLLFIMKYGFRKIEAIVGTLIFTVLFIFIFEVYISSPQLNAVLNGFIPHSEIITNNGILYIALGIIGATIMPHNLYLHSSIVQSRTYSRHNNEEKAQAIKFATIDSNIQLSIAFVVNCLLLVLGASLFFNSNADDLGGFYDLYHALKTEPVLGATMGAIMSTLFAVALLASGQNSTITGTLAGQIVMEGFLRLHIPNWLRRLITRSLAVIPVIVCLIIFKGNAAKIEQLLVFSQVFLSIALPFCLIPLQLATSNKDLMGPFYNKTWVNIISWTLIIILSILNVYLIVQTFQELQS</sequence>
<gene>
    <name evidence="1" type="primary">mntH</name>
    <name type="ordered locus">NWMN_0971</name>
</gene>
<evidence type="ECO:0000255" key="1">
    <source>
        <dbReference type="HAMAP-Rule" id="MF_00221"/>
    </source>
</evidence>